<name>NIFH_METMA</name>
<comment type="function">
    <text evidence="1">The key enzymatic reactions in nitrogen fixation are catalyzed by the nitrogenase complex, which has 2 components: the iron protein and the molybdenum-iron protein.</text>
</comment>
<comment type="catalytic activity">
    <reaction evidence="1">
        <text>N2 + 8 reduced [2Fe-2S]-[ferredoxin] + 16 ATP + 16 H2O = H2 + 8 oxidized [2Fe-2S]-[ferredoxin] + 2 NH4(+) + 16 ADP + 16 phosphate + 6 H(+)</text>
        <dbReference type="Rhea" id="RHEA:21448"/>
        <dbReference type="Rhea" id="RHEA-COMP:10000"/>
        <dbReference type="Rhea" id="RHEA-COMP:10001"/>
        <dbReference type="ChEBI" id="CHEBI:15377"/>
        <dbReference type="ChEBI" id="CHEBI:15378"/>
        <dbReference type="ChEBI" id="CHEBI:17997"/>
        <dbReference type="ChEBI" id="CHEBI:18276"/>
        <dbReference type="ChEBI" id="CHEBI:28938"/>
        <dbReference type="ChEBI" id="CHEBI:30616"/>
        <dbReference type="ChEBI" id="CHEBI:33737"/>
        <dbReference type="ChEBI" id="CHEBI:33738"/>
        <dbReference type="ChEBI" id="CHEBI:43474"/>
        <dbReference type="ChEBI" id="CHEBI:456216"/>
        <dbReference type="EC" id="1.18.6.1"/>
    </reaction>
</comment>
<comment type="cofactor">
    <cofactor evidence="1">
        <name>[4Fe-4S] cluster</name>
        <dbReference type="ChEBI" id="CHEBI:49883"/>
    </cofactor>
    <text evidence="1">Binds 1 [4Fe-4S] cluster per dimer.</text>
</comment>
<comment type="subunit">
    <text evidence="1">Homodimer.</text>
</comment>
<comment type="PTM">
    <text evidence="1">The reversible ADP-ribosylation of Arg-98 inactivates the nitrogenase reductase and regulates nitrogenase activity.</text>
</comment>
<comment type="similarity">
    <text evidence="1">Belongs to the NifH/BchL/ChlL family.</text>
</comment>
<keyword id="KW-0004">4Fe-4S</keyword>
<keyword id="KW-0013">ADP-ribosylation</keyword>
<keyword id="KW-0067">ATP-binding</keyword>
<keyword id="KW-0408">Iron</keyword>
<keyword id="KW-0411">Iron-sulfur</keyword>
<keyword id="KW-0479">Metal-binding</keyword>
<keyword id="KW-0535">Nitrogen fixation</keyword>
<keyword id="KW-0547">Nucleotide-binding</keyword>
<keyword id="KW-0560">Oxidoreductase</keyword>
<proteinExistence type="inferred from homology"/>
<sequence length="273" mass="29158">MRQIAIYGKGGIGKSTTTQNLTAALATMGNKILLVGCDPKADSTRMLLGGLNQKTVLDTLRSEGDEGVNLDVVVQPGFGNIKCVESGGPEPGVGCAGRGIITSIGLLENLGAYTEDLDYVFYDVLGDVVCGGFAMPIREGKAKEIYIVASGELMAIYAANNICKGLAKFAKGGARLGGIICNSRNVDGERELLEAFAKKLGSQLIHFVPRDNIVQRAEINRKTVIDFDPESNQAKEYLTLASNVQNNTKLVVPTPLPMEELEAMMVEFGIVEL</sequence>
<dbReference type="EC" id="1.18.6.1" evidence="1"/>
<dbReference type="EMBL" id="AY029234">
    <property type="protein sequence ID" value="AAK33112.1"/>
    <property type="molecule type" value="Genomic_DNA"/>
</dbReference>
<dbReference type="EMBL" id="AE008384">
    <property type="protein sequence ID" value="AAM30415.1"/>
    <property type="molecule type" value="Genomic_DNA"/>
</dbReference>
<dbReference type="RefSeq" id="WP_011032670.1">
    <property type="nucleotide sequence ID" value="NC_003901.1"/>
</dbReference>
<dbReference type="SMR" id="Q8PYY0"/>
<dbReference type="GeneID" id="82159739"/>
<dbReference type="KEGG" id="mma:MM_0719"/>
<dbReference type="PATRIC" id="fig|192952.21.peg.856"/>
<dbReference type="eggNOG" id="arCOG00590">
    <property type="taxonomic scope" value="Archaea"/>
</dbReference>
<dbReference type="HOGENOM" id="CLU_059373_0_0_2"/>
<dbReference type="Proteomes" id="UP000000595">
    <property type="component" value="Chromosome"/>
</dbReference>
<dbReference type="GO" id="GO:0051539">
    <property type="term" value="F:4 iron, 4 sulfur cluster binding"/>
    <property type="evidence" value="ECO:0007669"/>
    <property type="project" value="UniProtKB-KW"/>
</dbReference>
<dbReference type="GO" id="GO:0005524">
    <property type="term" value="F:ATP binding"/>
    <property type="evidence" value="ECO:0007669"/>
    <property type="project" value="UniProtKB-UniRule"/>
</dbReference>
<dbReference type="GO" id="GO:0046872">
    <property type="term" value="F:metal ion binding"/>
    <property type="evidence" value="ECO:0007669"/>
    <property type="project" value="UniProtKB-KW"/>
</dbReference>
<dbReference type="GO" id="GO:0016163">
    <property type="term" value="F:nitrogenase activity"/>
    <property type="evidence" value="ECO:0007669"/>
    <property type="project" value="UniProtKB-UniRule"/>
</dbReference>
<dbReference type="GO" id="GO:0009399">
    <property type="term" value="P:nitrogen fixation"/>
    <property type="evidence" value="ECO:0007669"/>
    <property type="project" value="UniProtKB-UniRule"/>
</dbReference>
<dbReference type="CDD" id="cd02040">
    <property type="entry name" value="NifH"/>
    <property type="match status" value="1"/>
</dbReference>
<dbReference type="Gene3D" id="3.40.50.300">
    <property type="entry name" value="P-loop containing nucleotide triphosphate hydrolases"/>
    <property type="match status" value="1"/>
</dbReference>
<dbReference type="HAMAP" id="MF_00533">
    <property type="entry name" value="NifH"/>
    <property type="match status" value="1"/>
</dbReference>
<dbReference type="InterPro" id="IPR030655">
    <property type="entry name" value="NifH/chlL_CS"/>
</dbReference>
<dbReference type="InterPro" id="IPR000392">
    <property type="entry name" value="NifH/frxC"/>
</dbReference>
<dbReference type="InterPro" id="IPR005977">
    <property type="entry name" value="Nitrogenase_Fe_NifH"/>
</dbReference>
<dbReference type="InterPro" id="IPR027417">
    <property type="entry name" value="P-loop_NTPase"/>
</dbReference>
<dbReference type="NCBIfam" id="TIGR01287">
    <property type="entry name" value="nifH"/>
    <property type="match status" value="1"/>
</dbReference>
<dbReference type="PANTHER" id="PTHR42864">
    <property type="entry name" value="LIGHT-INDEPENDENT PROTOCHLOROPHYLLIDE REDUCTASE IRON-SULFUR ATP-BINDING PROTEIN"/>
    <property type="match status" value="1"/>
</dbReference>
<dbReference type="PANTHER" id="PTHR42864:SF2">
    <property type="entry name" value="LIGHT-INDEPENDENT PROTOCHLOROPHYLLIDE REDUCTASE IRON-SULFUR ATP-BINDING PROTEIN"/>
    <property type="match status" value="1"/>
</dbReference>
<dbReference type="Pfam" id="PF00142">
    <property type="entry name" value="Fer4_NifH"/>
    <property type="match status" value="1"/>
</dbReference>
<dbReference type="PIRSF" id="PIRSF000363">
    <property type="entry name" value="Nitrogenase_iron"/>
    <property type="match status" value="1"/>
</dbReference>
<dbReference type="PRINTS" id="PR00091">
    <property type="entry name" value="NITROGNASEII"/>
</dbReference>
<dbReference type="SUPFAM" id="SSF52540">
    <property type="entry name" value="P-loop containing nucleoside triphosphate hydrolases"/>
    <property type="match status" value="1"/>
</dbReference>
<dbReference type="PROSITE" id="PS00746">
    <property type="entry name" value="NIFH_FRXC_1"/>
    <property type="match status" value="1"/>
</dbReference>
<dbReference type="PROSITE" id="PS00692">
    <property type="entry name" value="NIFH_FRXC_2"/>
    <property type="match status" value="1"/>
</dbReference>
<dbReference type="PROSITE" id="PS51026">
    <property type="entry name" value="NIFH_FRXC_3"/>
    <property type="match status" value="1"/>
</dbReference>
<gene>
    <name evidence="1" type="primary">nifH</name>
    <name type="ordered locus">MM_0719</name>
</gene>
<evidence type="ECO:0000255" key="1">
    <source>
        <dbReference type="HAMAP-Rule" id="MF_00533"/>
    </source>
</evidence>
<feature type="chain" id="PRO_0000139540" description="Nitrogenase iron protein">
    <location>
        <begin position="1"/>
        <end position="273"/>
    </location>
</feature>
<feature type="binding site" evidence="1">
    <location>
        <begin position="8"/>
        <end position="15"/>
    </location>
    <ligand>
        <name>ATP</name>
        <dbReference type="ChEBI" id="CHEBI:30616"/>
    </ligand>
</feature>
<feature type="binding site" evidence="1">
    <location>
        <position position="95"/>
    </location>
    <ligand>
        <name>[4Fe-4S] cluster</name>
        <dbReference type="ChEBI" id="CHEBI:49883"/>
        <note>ligand shared between dimeric partners</note>
    </ligand>
</feature>
<feature type="binding site" evidence="1">
    <location>
        <position position="130"/>
    </location>
    <ligand>
        <name>[4Fe-4S] cluster</name>
        <dbReference type="ChEBI" id="CHEBI:49883"/>
        <note>ligand shared between dimeric partners</note>
    </ligand>
</feature>
<feature type="modified residue" description="ADP-ribosylarginine; by dinitrogenase reductase ADP-ribosyltransferase" evidence="1">
    <location>
        <position position="98"/>
    </location>
</feature>
<reference key="1">
    <citation type="submission" date="2001-04" db="EMBL/GenBank/DDBJ databases">
        <title>Functional organization of the nif operon in Methanosarcina mazei.</title>
        <authorList>
            <person name="Ehlers C."/>
            <person name="Veit K."/>
            <person name="Johann A."/>
            <person name="Gottschalk G."/>
            <person name="Schmitz R.A."/>
        </authorList>
    </citation>
    <scope>NUCLEOTIDE SEQUENCE [GENOMIC DNA]</scope>
    <source>
        <strain>ATCC BAA-159 / DSM 3647 / Goe1 / Go1 / JCM 11833 / OCM 88</strain>
    </source>
</reference>
<reference key="2">
    <citation type="journal article" date="2002" name="J. Mol. Microbiol. Biotechnol.">
        <title>The genome of Methanosarcina mazei: evidence for lateral gene transfer between Bacteria and Archaea.</title>
        <authorList>
            <person name="Deppenmeier U."/>
            <person name="Johann A."/>
            <person name="Hartsch T."/>
            <person name="Merkl R."/>
            <person name="Schmitz R.A."/>
            <person name="Martinez-Arias R."/>
            <person name="Henne A."/>
            <person name="Wiezer A."/>
            <person name="Baeumer S."/>
            <person name="Jacobi C."/>
            <person name="Brueggemann H."/>
            <person name="Lienard T."/>
            <person name="Christmann A."/>
            <person name="Boemecke M."/>
            <person name="Steckel S."/>
            <person name="Bhattacharyya A."/>
            <person name="Lykidis A."/>
            <person name="Overbeek R."/>
            <person name="Klenk H.-P."/>
            <person name="Gunsalus R.P."/>
            <person name="Fritz H.-J."/>
            <person name="Gottschalk G."/>
        </authorList>
    </citation>
    <scope>NUCLEOTIDE SEQUENCE [LARGE SCALE GENOMIC DNA]</scope>
    <source>
        <strain>ATCC BAA-159 / DSM 3647 / Goe1 / Go1 / JCM 11833 / OCM 88</strain>
    </source>
</reference>
<accession>Q8PYY0</accession>
<protein>
    <recommendedName>
        <fullName evidence="1">Nitrogenase iron protein</fullName>
        <ecNumber evidence="1">1.18.6.1</ecNumber>
    </recommendedName>
    <alternativeName>
        <fullName evidence="1">Nitrogenase Fe protein</fullName>
    </alternativeName>
    <alternativeName>
        <fullName evidence="1">Nitrogenase component II</fullName>
    </alternativeName>
    <alternativeName>
        <fullName evidence="1">Nitrogenase reductase</fullName>
    </alternativeName>
</protein>
<organism>
    <name type="scientific">Methanosarcina mazei (strain ATCC BAA-159 / DSM 3647 / Goe1 / Go1 / JCM 11833 / OCM 88)</name>
    <name type="common">Methanosarcina frisia</name>
    <dbReference type="NCBI Taxonomy" id="192952"/>
    <lineage>
        <taxon>Archaea</taxon>
        <taxon>Methanobacteriati</taxon>
        <taxon>Methanobacteriota</taxon>
        <taxon>Stenosarchaea group</taxon>
        <taxon>Methanomicrobia</taxon>
        <taxon>Methanosarcinales</taxon>
        <taxon>Methanosarcinaceae</taxon>
        <taxon>Methanosarcina</taxon>
    </lineage>
</organism>